<keyword id="KW-0067">ATP-binding</keyword>
<keyword id="KW-0963">Cytoplasm</keyword>
<keyword id="KW-0436">Ligase</keyword>
<keyword id="KW-0460">Magnesium</keyword>
<keyword id="KW-0479">Metal-binding</keyword>
<keyword id="KW-0547">Nucleotide-binding</keyword>
<keyword id="KW-0658">Purine biosynthesis</keyword>
<keyword id="KW-1185">Reference proteome</keyword>
<evidence type="ECO:0000255" key="1">
    <source>
        <dbReference type="HAMAP-Rule" id="MF_00420"/>
    </source>
</evidence>
<evidence type="ECO:0000256" key="2">
    <source>
        <dbReference type="SAM" id="MobiDB-lite"/>
    </source>
</evidence>
<sequence>MTVSPTSAPTQAIDTVERAATTPDEPQPFGELGLKDDEYQRIREILGRRPTDTELAMYSVMWSEHCSYKSSKVHLRYFGETTTDEMRAGMLAGIGENAGVVDIGDGWAVTFKVESHNHPSYVEPYQGAATGVGGIVRDIMAMGARPVAVMDQLRFGAADAPDTRRVLDGVVRGIGGYGNSLGLPNIGGETVFDACYAGNPLVNAMCVGVLRQEDLHMAFASGTGNKIILFGARTGLDGIGGVSVLASDTFDAENSRKKLPSVQVGDPFMEKVLIECCLELYAGGLVVGIQDLGGAGLACATSELASAGDGGMEVRLEAVPLRTAGMTPAEVLCSESQERMCAVVTPENVDAFLAVCRKWDVLATVIGEVTDGDRLRITWHGQTVVDVPPRTVAHEGPVYQRPLARPDTQDALNADSSARLPRPATGAELRATLLALLGSPHLCSRAFITEQYDRYVRGNTVLAEHADGGVLRVDETTGRGIAVSTDASGRYTMLDPYAGAQLALAEAYRNVAVTGATPVAVTNCLNFGSPEDPAVMWQFAQAVRGLADGCVALGIPVTGGNVSFYNQTGSAAILPTPVVGVLGVLDDVSRRLPTALGAEPGETLMLLGETRDEFDGSVWAQVTADHLGGLPPKVDLAREKLLAEVLRAASRDGLVSAAHDLSEGGLAQAVVEAALAGETGCRIVLPEDADPFVTLFSESAGRVLVAVPRTEESRFRSMCEARGLPAVRIGVVDQASDEVEVQGLFTVPLAELRQTSESVLPRLFG</sequence>
<name>PURL_MYCPA</name>
<dbReference type="EC" id="6.3.5.3" evidence="1"/>
<dbReference type="EMBL" id="AE016958">
    <property type="protein sequence ID" value="AAS02952.1"/>
    <property type="molecule type" value="Genomic_DNA"/>
</dbReference>
<dbReference type="RefSeq" id="WP_010948916.1">
    <property type="nucleotide sequence ID" value="NZ_CP106873.1"/>
</dbReference>
<dbReference type="SMR" id="Q743F0"/>
<dbReference type="STRING" id="262316.MAP_0635"/>
<dbReference type="KEGG" id="mpa:MAP_0635"/>
<dbReference type="PATRIC" id="fig|262316.17.peg.669"/>
<dbReference type="eggNOG" id="COG0046">
    <property type="taxonomic scope" value="Bacteria"/>
</dbReference>
<dbReference type="HOGENOM" id="CLU_003100_0_1_11"/>
<dbReference type="UniPathway" id="UPA00074">
    <property type="reaction ID" value="UER00128"/>
</dbReference>
<dbReference type="Proteomes" id="UP000000580">
    <property type="component" value="Chromosome"/>
</dbReference>
<dbReference type="GO" id="GO:0005737">
    <property type="term" value="C:cytoplasm"/>
    <property type="evidence" value="ECO:0007669"/>
    <property type="project" value="UniProtKB-SubCell"/>
</dbReference>
<dbReference type="GO" id="GO:0005524">
    <property type="term" value="F:ATP binding"/>
    <property type="evidence" value="ECO:0007669"/>
    <property type="project" value="UniProtKB-UniRule"/>
</dbReference>
<dbReference type="GO" id="GO:0000287">
    <property type="term" value="F:magnesium ion binding"/>
    <property type="evidence" value="ECO:0007669"/>
    <property type="project" value="UniProtKB-UniRule"/>
</dbReference>
<dbReference type="GO" id="GO:0004642">
    <property type="term" value="F:phosphoribosylformylglycinamidine synthase activity"/>
    <property type="evidence" value="ECO:0007669"/>
    <property type="project" value="UniProtKB-UniRule"/>
</dbReference>
<dbReference type="GO" id="GO:0006189">
    <property type="term" value="P:'de novo' IMP biosynthetic process"/>
    <property type="evidence" value="ECO:0007669"/>
    <property type="project" value="UniProtKB-UniRule"/>
</dbReference>
<dbReference type="CDD" id="cd02203">
    <property type="entry name" value="PurL_repeat1"/>
    <property type="match status" value="1"/>
</dbReference>
<dbReference type="CDD" id="cd02204">
    <property type="entry name" value="PurL_repeat2"/>
    <property type="match status" value="1"/>
</dbReference>
<dbReference type="FunFam" id="3.30.1330.10:FF:000004">
    <property type="entry name" value="Phosphoribosylformylglycinamidine synthase subunit PurL"/>
    <property type="match status" value="1"/>
</dbReference>
<dbReference type="FunFam" id="3.30.1330.10:FF:000021">
    <property type="entry name" value="Phosphoribosylformylglycinamidine synthase subunit PurL"/>
    <property type="match status" value="1"/>
</dbReference>
<dbReference type="FunFam" id="3.90.650.10:FF:000009">
    <property type="entry name" value="Phosphoribosylformylglycinamidine synthase subunit PurL"/>
    <property type="match status" value="1"/>
</dbReference>
<dbReference type="Gene3D" id="3.90.650.10">
    <property type="entry name" value="PurM-like C-terminal domain"/>
    <property type="match status" value="2"/>
</dbReference>
<dbReference type="Gene3D" id="3.30.1330.10">
    <property type="entry name" value="PurM-like, N-terminal domain"/>
    <property type="match status" value="2"/>
</dbReference>
<dbReference type="HAMAP" id="MF_00420">
    <property type="entry name" value="PurL_2"/>
    <property type="match status" value="1"/>
</dbReference>
<dbReference type="InterPro" id="IPR010074">
    <property type="entry name" value="PRibForGlyAmidine_synth_PurL"/>
</dbReference>
<dbReference type="InterPro" id="IPR041609">
    <property type="entry name" value="PurL_linker"/>
</dbReference>
<dbReference type="InterPro" id="IPR010918">
    <property type="entry name" value="PurM-like_C_dom"/>
</dbReference>
<dbReference type="InterPro" id="IPR036676">
    <property type="entry name" value="PurM-like_C_sf"/>
</dbReference>
<dbReference type="InterPro" id="IPR016188">
    <property type="entry name" value="PurM-like_N"/>
</dbReference>
<dbReference type="InterPro" id="IPR036921">
    <property type="entry name" value="PurM-like_N_sf"/>
</dbReference>
<dbReference type="NCBIfam" id="TIGR01736">
    <property type="entry name" value="FGAM_synth_II"/>
    <property type="match status" value="1"/>
</dbReference>
<dbReference type="NCBIfam" id="NF002290">
    <property type="entry name" value="PRK01213.1"/>
    <property type="match status" value="1"/>
</dbReference>
<dbReference type="PANTHER" id="PTHR43555">
    <property type="entry name" value="PHOSPHORIBOSYLFORMYLGLYCINAMIDINE SYNTHASE SUBUNIT PURL"/>
    <property type="match status" value="1"/>
</dbReference>
<dbReference type="PANTHER" id="PTHR43555:SF1">
    <property type="entry name" value="PHOSPHORIBOSYLFORMYLGLYCINAMIDINE SYNTHASE SUBUNIT PURL"/>
    <property type="match status" value="1"/>
</dbReference>
<dbReference type="Pfam" id="PF00586">
    <property type="entry name" value="AIRS"/>
    <property type="match status" value="2"/>
</dbReference>
<dbReference type="Pfam" id="PF02769">
    <property type="entry name" value="AIRS_C"/>
    <property type="match status" value="2"/>
</dbReference>
<dbReference type="Pfam" id="PF18072">
    <property type="entry name" value="FGAR-AT_linker"/>
    <property type="match status" value="1"/>
</dbReference>
<dbReference type="PIRSF" id="PIRSF001587">
    <property type="entry name" value="FGAM_synthase_II"/>
    <property type="match status" value="1"/>
</dbReference>
<dbReference type="SUPFAM" id="SSF56042">
    <property type="entry name" value="PurM C-terminal domain-like"/>
    <property type="match status" value="2"/>
</dbReference>
<dbReference type="SUPFAM" id="SSF55326">
    <property type="entry name" value="PurM N-terminal domain-like"/>
    <property type="match status" value="2"/>
</dbReference>
<comment type="function">
    <text evidence="1">Part of the phosphoribosylformylglycinamidine synthase complex involved in the purines biosynthetic pathway. Catalyzes the ATP-dependent conversion of formylglycinamide ribonucleotide (FGAR) and glutamine to yield formylglycinamidine ribonucleotide (FGAM) and glutamate. The FGAM synthase complex is composed of three subunits. PurQ produces an ammonia molecule by converting glutamine to glutamate. PurL transfers the ammonia molecule to FGAR to form FGAM in an ATP-dependent manner. PurS interacts with PurQ and PurL and is thought to assist in the transfer of the ammonia molecule from PurQ to PurL.</text>
</comment>
<comment type="catalytic activity">
    <reaction evidence="1">
        <text>N(2)-formyl-N(1)-(5-phospho-beta-D-ribosyl)glycinamide + L-glutamine + ATP + H2O = 2-formamido-N(1)-(5-O-phospho-beta-D-ribosyl)acetamidine + L-glutamate + ADP + phosphate + H(+)</text>
        <dbReference type="Rhea" id="RHEA:17129"/>
        <dbReference type="ChEBI" id="CHEBI:15377"/>
        <dbReference type="ChEBI" id="CHEBI:15378"/>
        <dbReference type="ChEBI" id="CHEBI:29985"/>
        <dbReference type="ChEBI" id="CHEBI:30616"/>
        <dbReference type="ChEBI" id="CHEBI:43474"/>
        <dbReference type="ChEBI" id="CHEBI:58359"/>
        <dbReference type="ChEBI" id="CHEBI:147286"/>
        <dbReference type="ChEBI" id="CHEBI:147287"/>
        <dbReference type="ChEBI" id="CHEBI:456216"/>
        <dbReference type="EC" id="6.3.5.3"/>
    </reaction>
</comment>
<comment type="pathway">
    <text evidence="1">Purine metabolism; IMP biosynthesis via de novo pathway; 5-amino-1-(5-phospho-D-ribosyl)imidazole from N(2)-formyl-N(1)-(5-phospho-D-ribosyl)glycinamide: step 1/2.</text>
</comment>
<comment type="subunit">
    <text evidence="1">Monomer. Part of the FGAM synthase complex composed of 1 PurL, 1 PurQ and 2 PurS subunits.</text>
</comment>
<comment type="subcellular location">
    <subcellularLocation>
        <location evidence="1">Cytoplasm</location>
    </subcellularLocation>
</comment>
<comment type="similarity">
    <text evidence="1">Belongs to the FGAMS family.</text>
</comment>
<gene>
    <name evidence="1" type="primary">purL</name>
    <name type="ordered locus">MAP_0635</name>
</gene>
<organism>
    <name type="scientific">Mycolicibacterium paratuberculosis (strain ATCC BAA-968 / K-10)</name>
    <name type="common">Mycobacterium paratuberculosis</name>
    <dbReference type="NCBI Taxonomy" id="262316"/>
    <lineage>
        <taxon>Bacteria</taxon>
        <taxon>Bacillati</taxon>
        <taxon>Actinomycetota</taxon>
        <taxon>Actinomycetes</taxon>
        <taxon>Mycobacteriales</taxon>
        <taxon>Mycobacteriaceae</taxon>
        <taxon>Mycobacterium</taxon>
        <taxon>Mycobacterium avium complex (MAC)</taxon>
    </lineage>
</organism>
<accession>Q743F0</accession>
<reference key="1">
    <citation type="journal article" date="2005" name="Proc. Natl. Acad. Sci. U.S.A.">
        <title>The complete genome sequence of Mycobacterium avium subspecies paratuberculosis.</title>
        <authorList>
            <person name="Li L."/>
            <person name="Bannantine J.P."/>
            <person name="Zhang Q."/>
            <person name="Amonsin A."/>
            <person name="May B.J."/>
            <person name="Alt D."/>
            <person name="Banerji N."/>
            <person name="Kanjilal S."/>
            <person name="Kapur V."/>
        </authorList>
    </citation>
    <scope>NUCLEOTIDE SEQUENCE [LARGE SCALE GENOMIC DNA]</scope>
    <source>
        <strain>ATCC BAA-968 / K-10</strain>
    </source>
</reference>
<proteinExistence type="inferred from homology"/>
<feature type="chain" id="PRO_0000100472" description="Phosphoribosylformylglycinamidine synthase subunit PurL">
    <location>
        <begin position="1"/>
        <end position="765"/>
    </location>
</feature>
<feature type="region of interest" description="Disordered" evidence="2">
    <location>
        <begin position="1"/>
        <end position="32"/>
    </location>
</feature>
<feature type="compositionally biased region" description="Polar residues" evidence="2">
    <location>
        <begin position="1"/>
        <end position="13"/>
    </location>
</feature>
<feature type="active site" evidence="1">
    <location>
        <position position="65"/>
    </location>
</feature>
<feature type="active site" description="Proton acceptor" evidence="1">
    <location>
        <position position="116"/>
    </location>
</feature>
<feature type="binding site" evidence="1">
    <location>
        <position position="68"/>
    </location>
    <ligand>
        <name>ATP</name>
        <dbReference type="ChEBI" id="CHEBI:30616"/>
    </ligand>
</feature>
<feature type="binding site" evidence="1">
    <location>
        <position position="112"/>
    </location>
    <ligand>
        <name>ATP</name>
        <dbReference type="ChEBI" id="CHEBI:30616"/>
    </ligand>
</feature>
<feature type="binding site" evidence="1">
    <location>
        <position position="114"/>
    </location>
    <ligand>
        <name>Mg(2+)</name>
        <dbReference type="ChEBI" id="CHEBI:18420"/>
        <label>1</label>
    </ligand>
</feature>
<feature type="binding site" evidence="1">
    <location>
        <begin position="115"/>
        <end position="118"/>
    </location>
    <ligand>
        <name>substrate</name>
    </ligand>
</feature>
<feature type="binding site" evidence="1">
    <location>
        <position position="137"/>
    </location>
    <ligand>
        <name>substrate</name>
    </ligand>
</feature>
<feature type="binding site" evidence="1">
    <location>
        <position position="138"/>
    </location>
    <ligand>
        <name>Mg(2+)</name>
        <dbReference type="ChEBI" id="CHEBI:18420"/>
        <label>2</label>
    </ligand>
</feature>
<feature type="binding site" evidence="1">
    <location>
        <position position="263"/>
    </location>
    <ligand>
        <name>substrate</name>
    </ligand>
</feature>
<feature type="binding site" evidence="1">
    <location>
        <position position="291"/>
    </location>
    <ligand>
        <name>Mg(2+)</name>
        <dbReference type="ChEBI" id="CHEBI:18420"/>
        <label>2</label>
    </ligand>
</feature>
<feature type="binding site" evidence="1">
    <location>
        <begin position="335"/>
        <end position="337"/>
    </location>
    <ligand>
        <name>substrate</name>
    </ligand>
</feature>
<feature type="binding site" evidence="1">
    <location>
        <position position="523"/>
    </location>
    <ligand>
        <name>ATP</name>
        <dbReference type="ChEBI" id="CHEBI:30616"/>
    </ligand>
</feature>
<feature type="binding site" evidence="1">
    <location>
        <position position="560"/>
    </location>
    <ligand>
        <name>ATP</name>
        <dbReference type="ChEBI" id="CHEBI:30616"/>
    </ligand>
</feature>
<feature type="binding site" evidence="1">
    <location>
        <position position="561"/>
    </location>
    <ligand>
        <name>Mg(2+)</name>
        <dbReference type="ChEBI" id="CHEBI:18420"/>
        <label>1</label>
    </ligand>
</feature>
<feature type="binding site" evidence="1">
    <location>
        <position position="563"/>
    </location>
    <ligand>
        <name>substrate</name>
    </ligand>
</feature>
<protein>
    <recommendedName>
        <fullName evidence="1">Phosphoribosylformylglycinamidine synthase subunit PurL</fullName>
        <shortName evidence="1">FGAM synthase</shortName>
        <ecNumber evidence="1">6.3.5.3</ecNumber>
    </recommendedName>
    <alternativeName>
        <fullName evidence="1">Formylglycinamide ribonucleotide amidotransferase subunit II</fullName>
        <shortName evidence="1">FGAR amidotransferase II</shortName>
        <shortName evidence="1">FGAR-AT II</shortName>
    </alternativeName>
    <alternativeName>
        <fullName evidence="1">Glutamine amidotransferase PurL</fullName>
    </alternativeName>
    <alternativeName>
        <fullName evidence="1">Phosphoribosylformylglycinamidine synthase subunit II</fullName>
    </alternativeName>
</protein>